<reference key="1">
    <citation type="submission" date="2006-08" db="EMBL/GenBank/DDBJ databases">
        <title>Complete sequence of Maricaulis maris MCS10.</title>
        <authorList>
            <consortium name="US DOE Joint Genome Institute"/>
            <person name="Copeland A."/>
            <person name="Lucas S."/>
            <person name="Lapidus A."/>
            <person name="Barry K."/>
            <person name="Detter J.C."/>
            <person name="Glavina del Rio T."/>
            <person name="Hammon N."/>
            <person name="Israni S."/>
            <person name="Dalin E."/>
            <person name="Tice H."/>
            <person name="Pitluck S."/>
            <person name="Saunders E."/>
            <person name="Brettin T."/>
            <person name="Bruce D."/>
            <person name="Han C."/>
            <person name="Tapia R."/>
            <person name="Gilna P."/>
            <person name="Schmutz J."/>
            <person name="Larimer F."/>
            <person name="Land M."/>
            <person name="Hauser L."/>
            <person name="Kyrpides N."/>
            <person name="Mikhailova N."/>
            <person name="Viollier P."/>
            <person name="Stephens C."/>
            <person name="Richardson P."/>
        </authorList>
    </citation>
    <scope>NUCLEOTIDE SEQUENCE [LARGE SCALE GENOMIC DNA]</scope>
    <source>
        <strain>MCS10</strain>
    </source>
</reference>
<proteinExistence type="inferred from homology"/>
<gene>
    <name evidence="1" type="primary">uvrC</name>
    <name type="ordered locus">Mmar10_0772</name>
</gene>
<sequence>MTSQTPQSGEIDDASAAPAQSLAGAKLIADYVRNLPPKPGVYRMFGEDGAVLYVGKARNLKNRVSNYANGRGHSNRIALMIGLTRKMEFVVTQTETEALLLEANLIKSLKPRFNILLRDDKSFPYILIRKDHPAAQLTKHRGARKAKGDYFGPFASVGAVNQTLNTLQKAFLVRTCSDSVYEGRSRACMLHQIKRCAGPCVDLIDPAAYDELVGQATDFLRGRSNALREDLQTRMAQASEAMDFETAAKLRDRIRAIAAVTTDQGINPDGVEEADVVAVHSDGGKSCVQVFFFRAGQNWGNQSFFPRHDMEAEPAEVLAAFIAQFYDDKPAPALILLSHEIEEAELLGEALSLRTERKVSLHTPRRGEKRKLVDRTLTNAREALARRMAESASQTQLLKGVQRVFDLTDLPQRIEVYDNSHIQGTNALGAMIVAGPEGFEKNHYRRFNMKGDDAATNDDFAMMKAMLKRRFSRLLKERDDGAPVPDLVLIDGGKGQLSSVMEIAEELGITDETGITIAAIAKGPERDAGREAFYLPGKPPFKLPMKDPVLYYLQRLRDEAHRFAIGGHRAKRKKQMTDNPLDGIDGIGPSRKKALLAHFGSAKAVRNAALADLEAVDGISRAMARKIHDWFQK</sequence>
<protein>
    <recommendedName>
        <fullName evidence="1">UvrABC system protein C</fullName>
        <shortName evidence="1">Protein UvrC</shortName>
    </recommendedName>
    <alternativeName>
        <fullName evidence="1">Excinuclease ABC subunit C</fullName>
    </alternativeName>
</protein>
<keyword id="KW-0963">Cytoplasm</keyword>
<keyword id="KW-0227">DNA damage</keyword>
<keyword id="KW-0228">DNA excision</keyword>
<keyword id="KW-0234">DNA repair</keyword>
<keyword id="KW-0267">Excision nuclease</keyword>
<keyword id="KW-1185">Reference proteome</keyword>
<keyword id="KW-0742">SOS response</keyword>
<evidence type="ECO:0000255" key="1">
    <source>
        <dbReference type="HAMAP-Rule" id="MF_00203"/>
    </source>
</evidence>
<name>UVRC_MARMM</name>
<dbReference type="EMBL" id="CP000449">
    <property type="protein sequence ID" value="ABI65065.1"/>
    <property type="molecule type" value="Genomic_DNA"/>
</dbReference>
<dbReference type="RefSeq" id="WP_011642712.1">
    <property type="nucleotide sequence ID" value="NC_008347.1"/>
</dbReference>
<dbReference type="SMR" id="Q0ARM2"/>
<dbReference type="STRING" id="394221.Mmar10_0772"/>
<dbReference type="KEGG" id="mmr:Mmar10_0772"/>
<dbReference type="eggNOG" id="COG0322">
    <property type="taxonomic scope" value="Bacteria"/>
</dbReference>
<dbReference type="HOGENOM" id="CLU_014841_3_0_5"/>
<dbReference type="OrthoDB" id="9804933at2"/>
<dbReference type="Proteomes" id="UP000001964">
    <property type="component" value="Chromosome"/>
</dbReference>
<dbReference type="GO" id="GO:0005737">
    <property type="term" value="C:cytoplasm"/>
    <property type="evidence" value="ECO:0007669"/>
    <property type="project" value="UniProtKB-SubCell"/>
</dbReference>
<dbReference type="GO" id="GO:0009380">
    <property type="term" value="C:excinuclease repair complex"/>
    <property type="evidence" value="ECO:0007669"/>
    <property type="project" value="InterPro"/>
</dbReference>
<dbReference type="GO" id="GO:0003677">
    <property type="term" value="F:DNA binding"/>
    <property type="evidence" value="ECO:0007669"/>
    <property type="project" value="UniProtKB-UniRule"/>
</dbReference>
<dbReference type="GO" id="GO:0009381">
    <property type="term" value="F:excinuclease ABC activity"/>
    <property type="evidence" value="ECO:0007669"/>
    <property type="project" value="UniProtKB-UniRule"/>
</dbReference>
<dbReference type="GO" id="GO:0006289">
    <property type="term" value="P:nucleotide-excision repair"/>
    <property type="evidence" value="ECO:0007669"/>
    <property type="project" value="UniProtKB-UniRule"/>
</dbReference>
<dbReference type="GO" id="GO:0009432">
    <property type="term" value="P:SOS response"/>
    <property type="evidence" value="ECO:0007669"/>
    <property type="project" value="UniProtKB-UniRule"/>
</dbReference>
<dbReference type="CDD" id="cd10434">
    <property type="entry name" value="GIY-YIG_UvrC_Cho"/>
    <property type="match status" value="1"/>
</dbReference>
<dbReference type="FunFam" id="3.30.420.340:FF:000001">
    <property type="entry name" value="UvrABC system protein C"/>
    <property type="match status" value="1"/>
</dbReference>
<dbReference type="FunFam" id="3.40.1440.10:FF:000001">
    <property type="entry name" value="UvrABC system protein C"/>
    <property type="match status" value="1"/>
</dbReference>
<dbReference type="Gene3D" id="1.10.150.20">
    <property type="entry name" value="5' to 3' exonuclease, C-terminal subdomain"/>
    <property type="match status" value="1"/>
</dbReference>
<dbReference type="Gene3D" id="3.40.1440.10">
    <property type="entry name" value="GIY-YIG endonuclease"/>
    <property type="match status" value="1"/>
</dbReference>
<dbReference type="Gene3D" id="4.10.860.10">
    <property type="entry name" value="UVR domain"/>
    <property type="match status" value="1"/>
</dbReference>
<dbReference type="Gene3D" id="3.30.420.340">
    <property type="entry name" value="UvrC, RNAse H endonuclease domain"/>
    <property type="match status" value="1"/>
</dbReference>
<dbReference type="HAMAP" id="MF_00203">
    <property type="entry name" value="UvrC"/>
    <property type="match status" value="1"/>
</dbReference>
<dbReference type="InterPro" id="IPR000305">
    <property type="entry name" value="GIY-YIG_endonuc"/>
</dbReference>
<dbReference type="InterPro" id="IPR035901">
    <property type="entry name" value="GIY-YIG_endonuc_sf"/>
</dbReference>
<dbReference type="InterPro" id="IPR047296">
    <property type="entry name" value="GIY-YIG_UvrC_Cho"/>
</dbReference>
<dbReference type="InterPro" id="IPR003583">
    <property type="entry name" value="Hlx-hairpin-Hlx_DNA-bd_motif"/>
</dbReference>
<dbReference type="InterPro" id="IPR010994">
    <property type="entry name" value="RuvA_2-like"/>
</dbReference>
<dbReference type="InterPro" id="IPR001943">
    <property type="entry name" value="UVR_dom"/>
</dbReference>
<dbReference type="InterPro" id="IPR036876">
    <property type="entry name" value="UVR_dom_sf"/>
</dbReference>
<dbReference type="InterPro" id="IPR050066">
    <property type="entry name" value="UvrABC_protein_C"/>
</dbReference>
<dbReference type="InterPro" id="IPR004791">
    <property type="entry name" value="UvrC"/>
</dbReference>
<dbReference type="InterPro" id="IPR001162">
    <property type="entry name" value="UvrC_RNase_H_dom"/>
</dbReference>
<dbReference type="InterPro" id="IPR038476">
    <property type="entry name" value="UvrC_RNase_H_dom_sf"/>
</dbReference>
<dbReference type="NCBIfam" id="NF001824">
    <property type="entry name" value="PRK00558.1-5"/>
    <property type="match status" value="1"/>
</dbReference>
<dbReference type="NCBIfam" id="TIGR00194">
    <property type="entry name" value="uvrC"/>
    <property type="match status" value="1"/>
</dbReference>
<dbReference type="PANTHER" id="PTHR30562:SF1">
    <property type="entry name" value="UVRABC SYSTEM PROTEIN C"/>
    <property type="match status" value="1"/>
</dbReference>
<dbReference type="PANTHER" id="PTHR30562">
    <property type="entry name" value="UVRC/OXIDOREDUCTASE"/>
    <property type="match status" value="1"/>
</dbReference>
<dbReference type="Pfam" id="PF01541">
    <property type="entry name" value="GIY-YIG"/>
    <property type="match status" value="1"/>
</dbReference>
<dbReference type="Pfam" id="PF14520">
    <property type="entry name" value="HHH_5"/>
    <property type="match status" value="1"/>
</dbReference>
<dbReference type="Pfam" id="PF02151">
    <property type="entry name" value="UVR"/>
    <property type="match status" value="1"/>
</dbReference>
<dbReference type="Pfam" id="PF22920">
    <property type="entry name" value="UvrC_RNaseH"/>
    <property type="match status" value="1"/>
</dbReference>
<dbReference type="Pfam" id="PF08459">
    <property type="entry name" value="UvrC_RNaseH_dom"/>
    <property type="match status" value="1"/>
</dbReference>
<dbReference type="SMART" id="SM00465">
    <property type="entry name" value="GIYc"/>
    <property type="match status" value="1"/>
</dbReference>
<dbReference type="SMART" id="SM00278">
    <property type="entry name" value="HhH1"/>
    <property type="match status" value="2"/>
</dbReference>
<dbReference type="SUPFAM" id="SSF46600">
    <property type="entry name" value="C-terminal UvrC-binding domain of UvrB"/>
    <property type="match status" value="1"/>
</dbReference>
<dbReference type="SUPFAM" id="SSF82771">
    <property type="entry name" value="GIY-YIG endonuclease"/>
    <property type="match status" value="1"/>
</dbReference>
<dbReference type="SUPFAM" id="SSF47781">
    <property type="entry name" value="RuvA domain 2-like"/>
    <property type="match status" value="1"/>
</dbReference>
<dbReference type="PROSITE" id="PS50164">
    <property type="entry name" value="GIY_YIG"/>
    <property type="match status" value="1"/>
</dbReference>
<dbReference type="PROSITE" id="PS50151">
    <property type="entry name" value="UVR"/>
    <property type="match status" value="1"/>
</dbReference>
<dbReference type="PROSITE" id="PS50165">
    <property type="entry name" value="UVRC"/>
    <property type="match status" value="1"/>
</dbReference>
<feature type="chain" id="PRO_0000264909" description="UvrABC system protein C">
    <location>
        <begin position="1"/>
        <end position="633"/>
    </location>
</feature>
<feature type="domain" description="GIY-YIG" evidence="1">
    <location>
        <begin position="37"/>
        <end position="115"/>
    </location>
</feature>
<feature type="domain" description="UVR" evidence="1">
    <location>
        <begin position="225"/>
        <end position="260"/>
    </location>
</feature>
<comment type="function">
    <text evidence="1">The UvrABC repair system catalyzes the recognition and processing of DNA lesions. UvrC both incises the 5' and 3' sides of the lesion. The N-terminal half is responsible for the 3' incision and the C-terminal half is responsible for the 5' incision.</text>
</comment>
<comment type="subunit">
    <text evidence="1">Interacts with UvrB in an incision complex.</text>
</comment>
<comment type="subcellular location">
    <subcellularLocation>
        <location evidence="1">Cytoplasm</location>
    </subcellularLocation>
</comment>
<comment type="similarity">
    <text evidence="1">Belongs to the UvrC family.</text>
</comment>
<organism>
    <name type="scientific">Maricaulis maris (strain MCS10)</name>
    <name type="common">Caulobacter maris</name>
    <dbReference type="NCBI Taxonomy" id="394221"/>
    <lineage>
        <taxon>Bacteria</taxon>
        <taxon>Pseudomonadati</taxon>
        <taxon>Pseudomonadota</taxon>
        <taxon>Alphaproteobacteria</taxon>
        <taxon>Maricaulales</taxon>
        <taxon>Maricaulaceae</taxon>
        <taxon>Maricaulis</taxon>
    </lineage>
</organism>
<accession>Q0ARM2</accession>